<gene>
    <name evidence="1" type="primary">truA</name>
    <name type="ordered locus">BQ2027_MB3484C</name>
</gene>
<feature type="chain" id="PRO_0000057416" description="tRNA pseudouridine synthase A">
    <location>
        <begin position="1"/>
        <end position="297"/>
    </location>
</feature>
<feature type="active site" description="Nucleophile" evidence="1">
    <location>
        <position position="72"/>
    </location>
</feature>
<feature type="binding site" evidence="1">
    <location>
        <position position="144"/>
    </location>
    <ligand>
        <name>substrate</name>
    </ligand>
</feature>
<keyword id="KW-0413">Isomerase</keyword>
<keyword id="KW-1185">Reference proteome</keyword>
<keyword id="KW-0819">tRNA processing</keyword>
<reference key="1">
    <citation type="journal article" date="2003" name="Proc. Natl. Acad. Sci. U.S.A.">
        <title>The complete genome sequence of Mycobacterium bovis.</title>
        <authorList>
            <person name="Garnier T."/>
            <person name="Eiglmeier K."/>
            <person name="Camus J.-C."/>
            <person name="Medina N."/>
            <person name="Mansoor H."/>
            <person name="Pryor M."/>
            <person name="Duthoy S."/>
            <person name="Grondin S."/>
            <person name="Lacroix C."/>
            <person name="Monsempe C."/>
            <person name="Simon S."/>
            <person name="Harris B."/>
            <person name="Atkin R."/>
            <person name="Doggett J."/>
            <person name="Mayes R."/>
            <person name="Keating L."/>
            <person name="Wheeler P.R."/>
            <person name="Parkhill J."/>
            <person name="Barrell B.G."/>
            <person name="Cole S.T."/>
            <person name="Gordon S.V."/>
            <person name="Hewinson R.G."/>
        </authorList>
    </citation>
    <scope>NUCLEOTIDE SEQUENCE [LARGE SCALE GENOMIC DNA]</scope>
    <source>
        <strain>ATCC BAA-935 / AF2122/97</strain>
    </source>
</reference>
<reference key="2">
    <citation type="journal article" date="2017" name="Genome Announc.">
        <title>Updated reference genome sequence and annotation of Mycobacterium bovis AF2122/97.</title>
        <authorList>
            <person name="Malone K.M."/>
            <person name="Farrell D."/>
            <person name="Stuber T.P."/>
            <person name="Schubert O.T."/>
            <person name="Aebersold R."/>
            <person name="Robbe-Austerman S."/>
            <person name="Gordon S.V."/>
        </authorList>
    </citation>
    <scope>NUCLEOTIDE SEQUENCE [LARGE SCALE GENOMIC DNA]</scope>
    <scope>GENOME REANNOTATION</scope>
    <source>
        <strain>ATCC BAA-935 / AF2122/97</strain>
    </source>
</reference>
<organism>
    <name type="scientific">Mycobacterium bovis (strain ATCC BAA-935 / AF2122/97)</name>
    <dbReference type="NCBI Taxonomy" id="233413"/>
    <lineage>
        <taxon>Bacteria</taxon>
        <taxon>Bacillati</taxon>
        <taxon>Actinomycetota</taxon>
        <taxon>Actinomycetes</taxon>
        <taxon>Mycobacteriales</taxon>
        <taxon>Mycobacteriaceae</taxon>
        <taxon>Mycobacterium</taxon>
        <taxon>Mycobacterium tuberculosis complex</taxon>
    </lineage>
</organism>
<proteinExistence type="inferred from homology"/>
<accession>P65847</accession>
<accession>A0A1R3Y4A0</accession>
<accession>O06322</accession>
<accession>X2BP35</accession>
<evidence type="ECO:0000255" key="1">
    <source>
        <dbReference type="HAMAP-Rule" id="MF_00171"/>
    </source>
</evidence>
<evidence type="ECO:0000305" key="2"/>
<sequence length="297" mass="32620">MSLTRRPPKSPPQRPPRISGVVRLRLDIAYDGTDFAGWAAQVGQRTVAGDLDAALTTIFRTPVRLRAAGRTDAGVHASGQVAHVDVPADALPNAYPRAGHVGDPEFLPLLRRLGRFLPADVRILDITRAPAGFDARFSALRRHYVYRLSTAPYGVEPQQARYITAWPRELDLDAMTAASRDLMGLHDFAAFCRHREGATTIRDLQRLDWSRAGTLVTAHVTADAFCWSMVRSLVGALLAVGEHRRATTWCRELLTATGRSSDFAVAPAHGLTLIQVDYPPDDQLASRNLVTRDVRSG</sequence>
<name>TRUA_MYCBO</name>
<dbReference type="EC" id="5.4.99.12" evidence="1"/>
<dbReference type="EMBL" id="LT708304">
    <property type="protein sequence ID" value="SIU02112.1"/>
    <property type="status" value="ALT_INIT"/>
    <property type="molecule type" value="Genomic_DNA"/>
</dbReference>
<dbReference type="RefSeq" id="NP_857124.2">
    <property type="nucleotide sequence ID" value="NC_002945.3"/>
</dbReference>
<dbReference type="RefSeq" id="WP_003418344.1">
    <property type="nucleotide sequence ID" value="NC_002945.4"/>
</dbReference>
<dbReference type="SMR" id="P65847"/>
<dbReference type="GeneID" id="45427444"/>
<dbReference type="KEGG" id="mbo:BQ2027_MB3484C"/>
<dbReference type="PATRIC" id="fig|233413.5.peg.3821"/>
<dbReference type="Proteomes" id="UP000001419">
    <property type="component" value="Chromosome"/>
</dbReference>
<dbReference type="GO" id="GO:0003723">
    <property type="term" value="F:RNA binding"/>
    <property type="evidence" value="ECO:0007669"/>
    <property type="project" value="InterPro"/>
</dbReference>
<dbReference type="GO" id="GO:0160147">
    <property type="term" value="F:tRNA pseudouridine(38-40) synthase activity"/>
    <property type="evidence" value="ECO:0007669"/>
    <property type="project" value="UniProtKB-EC"/>
</dbReference>
<dbReference type="GO" id="GO:0031119">
    <property type="term" value="P:tRNA pseudouridine synthesis"/>
    <property type="evidence" value="ECO:0007669"/>
    <property type="project" value="UniProtKB-UniRule"/>
</dbReference>
<dbReference type="CDD" id="cd02570">
    <property type="entry name" value="PseudoU_synth_EcTruA"/>
    <property type="match status" value="1"/>
</dbReference>
<dbReference type="FunFam" id="3.30.70.580:FF:000008">
    <property type="entry name" value="tRNA pseudouridine synthase A"/>
    <property type="match status" value="1"/>
</dbReference>
<dbReference type="FunFam" id="3.30.70.660:FF:000003">
    <property type="entry name" value="tRNA pseudouridine synthase A"/>
    <property type="match status" value="1"/>
</dbReference>
<dbReference type="Gene3D" id="3.30.70.660">
    <property type="entry name" value="Pseudouridine synthase I, catalytic domain, C-terminal subdomain"/>
    <property type="match status" value="1"/>
</dbReference>
<dbReference type="Gene3D" id="3.30.70.580">
    <property type="entry name" value="Pseudouridine synthase I, catalytic domain, N-terminal subdomain"/>
    <property type="match status" value="1"/>
</dbReference>
<dbReference type="HAMAP" id="MF_00171">
    <property type="entry name" value="TruA"/>
    <property type="match status" value="1"/>
</dbReference>
<dbReference type="InterPro" id="IPR020103">
    <property type="entry name" value="PsdUridine_synth_cat_dom_sf"/>
</dbReference>
<dbReference type="InterPro" id="IPR001406">
    <property type="entry name" value="PsdUridine_synth_TruA"/>
</dbReference>
<dbReference type="InterPro" id="IPR020097">
    <property type="entry name" value="PsdUridine_synth_TruA_a/b_dom"/>
</dbReference>
<dbReference type="InterPro" id="IPR020095">
    <property type="entry name" value="PsdUridine_synth_TruA_C"/>
</dbReference>
<dbReference type="InterPro" id="IPR020094">
    <property type="entry name" value="TruA/RsuA/RluB/E/F_N"/>
</dbReference>
<dbReference type="NCBIfam" id="TIGR00071">
    <property type="entry name" value="hisT_truA"/>
    <property type="match status" value="1"/>
</dbReference>
<dbReference type="PANTHER" id="PTHR11142">
    <property type="entry name" value="PSEUDOURIDYLATE SYNTHASE"/>
    <property type="match status" value="1"/>
</dbReference>
<dbReference type="PANTHER" id="PTHR11142:SF0">
    <property type="entry name" value="TRNA PSEUDOURIDINE SYNTHASE-LIKE 1"/>
    <property type="match status" value="1"/>
</dbReference>
<dbReference type="Pfam" id="PF01416">
    <property type="entry name" value="PseudoU_synth_1"/>
    <property type="match status" value="1"/>
</dbReference>
<dbReference type="PIRSF" id="PIRSF001430">
    <property type="entry name" value="tRNA_psdUrid_synth"/>
    <property type="match status" value="1"/>
</dbReference>
<dbReference type="SUPFAM" id="SSF55120">
    <property type="entry name" value="Pseudouridine synthase"/>
    <property type="match status" value="1"/>
</dbReference>
<comment type="function">
    <text evidence="1">Formation of pseudouridine at positions 38, 39 and 40 in the anticodon stem and loop of transfer RNAs.</text>
</comment>
<comment type="catalytic activity">
    <reaction evidence="1">
        <text>uridine(38/39/40) in tRNA = pseudouridine(38/39/40) in tRNA</text>
        <dbReference type="Rhea" id="RHEA:22376"/>
        <dbReference type="Rhea" id="RHEA-COMP:10085"/>
        <dbReference type="Rhea" id="RHEA-COMP:10087"/>
        <dbReference type="ChEBI" id="CHEBI:65314"/>
        <dbReference type="ChEBI" id="CHEBI:65315"/>
        <dbReference type="EC" id="5.4.99.12"/>
    </reaction>
</comment>
<comment type="subunit">
    <text evidence="1">Homodimer.</text>
</comment>
<comment type="similarity">
    <text evidence="1">Belongs to the tRNA pseudouridine synthase TruA family.</text>
</comment>
<comment type="sequence caution" evidence="2">
    <conflict type="erroneous initiation">
        <sequence resource="EMBL-CDS" id="SIU02112"/>
    </conflict>
    <text>Truncated N-terminus.</text>
</comment>
<protein>
    <recommendedName>
        <fullName evidence="1">tRNA pseudouridine synthase A</fullName>
        <ecNumber evidence="1">5.4.99.12</ecNumber>
    </recommendedName>
    <alternativeName>
        <fullName evidence="1">tRNA pseudouridine(38-40) synthase</fullName>
    </alternativeName>
    <alternativeName>
        <fullName evidence="1">tRNA pseudouridylate synthase I</fullName>
    </alternativeName>
    <alternativeName>
        <fullName evidence="1">tRNA-uridine isomerase I</fullName>
    </alternativeName>
</protein>